<comment type="function">
    <text evidence="1">Facilitates the functional incorporation of the urease nickel metallocenter. This process requires GTP hydrolysis, probably effectuated by UreG.</text>
</comment>
<comment type="subunit">
    <text evidence="1">Homodimer. UreD, UreF and UreG form a complex that acts as a GTP-hydrolysis-dependent molecular chaperone, activating the urease apoprotein by helping to assemble the nickel containing metallocenter of UreC. The UreE protein probably delivers the nickel.</text>
</comment>
<comment type="subcellular location">
    <subcellularLocation>
        <location evidence="1">Cytoplasm</location>
    </subcellularLocation>
</comment>
<comment type="similarity">
    <text evidence="1">Belongs to the SIMIBI class G3E GTPase family. UreG subfamily.</text>
</comment>
<protein>
    <recommendedName>
        <fullName evidence="1">Urease accessory protein UreG</fullName>
    </recommendedName>
</protein>
<sequence length="215" mass="22657">MGRVPRVGIGGPVGAGKSMLIERVVPVLAARGYHVSIVSNDVISKEDADRMRASLATERGLLPEDLVVGVATGGCPHTAVREDPSMNISIIEEIEAGHPELDLVIIESGGDNITTTFSPALADYFIYMIDVAGGDKYPRKGGLGIESCDLLLINKTDLAGMVGADLGVMRADAERIRGERPFGFVNCMTDEGITEVAERIIHDALLGAPPGHPVG</sequence>
<organism>
    <name type="scientific">Cenarchaeum symbiosum (strain A)</name>
    <dbReference type="NCBI Taxonomy" id="414004"/>
    <lineage>
        <taxon>Archaea</taxon>
        <taxon>Nitrososphaerota</taxon>
        <taxon>Candidatus Cenarchaeales</taxon>
        <taxon>Candidatus Cenarchaeaceae</taxon>
        <taxon>Candidatus Cenarchaeum</taxon>
    </lineage>
</organism>
<evidence type="ECO:0000255" key="1">
    <source>
        <dbReference type="HAMAP-Rule" id="MF_01389"/>
    </source>
</evidence>
<reference key="1">
    <citation type="journal article" date="2006" name="Proc. Natl. Acad. Sci. U.S.A.">
        <title>Genomic analysis of the uncultivated marine crenarchaeote Cenarchaeum symbiosum.</title>
        <authorList>
            <person name="Hallam S.J."/>
            <person name="Konstantinidis K.T."/>
            <person name="Putnam N."/>
            <person name="Schleper C."/>
            <person name="Watanabe Y."/>
            <person name="Sugahara J."/>
            <person name="Preston C."/>
            <person name="de la Torre J."/>
            <person name="Richardson P.M."/>
            <person name="DeLong E.F."/>
        </authorList>
    </citation>
    <scope>NUCLEOTIDE SEQUENCE [LARGE SCALE GENOMIC DNA]</scope>
    <source>
        <strain>A</strain>
    </source>
</reference>
<keyword id="KW-0143">Chaperone</keyword>
<keyword id="KW-0963">Cytoplasm</keyword>
<keyword id="KW-0342">GTP-binding</keyword>
<keyword id="KW-0996">Nickel insertion</keyword>
<keyword id="KW-0547">Nucleotide-binding</keyword>
<keyword id="KW-1185">Reference proteome</keyword>
<proteinExistence type="inferred from homology"/>
<gene>
    <name evidence="1" type="primary">ureG</name>
    <name type="ordered locus">CENSYa_0451</name>
</gene>
<feature type="chain" id="PRO_0000347458" description="Urease accessory protein UreG">
    <location>
        <begin position="1"/>
        <end position="215"/>
    </location>
</feature>
<feature type="binding site" evidence="1">
    <location>
        <begin position="11"/>
        <end position="18"/>
    </location>
    <ligand>
        <name>GTP</name>
        <dbReference type="ChEBI" id="CHEBI:37565"/>
    </ligand>
</feature>
<accession>A0RUR8</accession>
<name>UREG_CENSY</name>
<dbReference type="EMBL" id="DP000238">
    <property type="protein sequence ID" value="ABK77085.1"/>
    <property type="molecule type" value="Genomic_DNA"/>
</dbReference>
<dbReference type="SMR" id="A0RUR8"/>
<dbReference type="STRING" id="414004.CENSYa_0451"/>
<dbReference type="EnsemblBacteria" id="ABK77085">
    <property type="protein sequence ID" value="ABK77085"/>
    <property type="gene ID" value="CENSYa_0451"/>
</dbReference>
<dbReference type="KEGG" id="csy:CENSYa_0451"/>
<dbReference type="PATRIC" id="fig|414004.10.peg.410"/>
<dbReference type="HOGENOM" id="CLU_072144_1_0_2"/>
<dbReference type="Proteomes" id="UP000000758">
    <property type="component" value="Chromosome"/>
</dbReference>
<dbReference type="GO" id="GO:0005737">
    <property type="term" value="C:cytoplasm"/>
    <property type="evidence" value="ECO:0007669"/>
    <property type="project" value="UniProtKB-SubCell"/>
</dbReference>
<dbReference type="GO" id="GO:0005525">
    <property type="term" value="F:GTP binding"/>
    <property type="evidence" value="ECO:0007669"/>
    <property type="project" value="UniProtKB-KW"/>
</dbReference>
<dbReference type="GO" id="GO:0003924">
    <property type="term" value="F:GTPase activity"/>
    <property type="evidence" value="ECO:0007669"/>
    <property type="project" value="InterPro"/>
</dbReference>
<dbReference type="GO" id="GO:0016151">
    <property type="term" value="F:nickel cation binding"/>
    <property type="evidence" value="ECO:0007669"/>
    <property type="project" value="UniProtKB-UniRule"/>
</dbReference>
<dbReference type="GO" id="GO:0043419">
    <property type="term" value="P:urea catabolic process"/>
    <property type="evidence" value="ECO:0007669"/>
    <property type="project" value="InterPro"/>
</dbReference>
<dbReference type="CDD" id="cd05540">
    <property type="entry name" value="UreG"/>
    <property type="match status" value="1"/>
</dbReference>
<dbReference type="Gene3D" id="3.40.50.300">
    <property type="entry name" value="P-loop containing nucleotide triphosphate hydrolases"/>
    <property type="match status" value="1"/>
</dbReference>
<dbReference type="HAMAP" id="MF_01389">
    <property type="entry name" value="UreG"/>
    <property type="match status" value="1"/>
</dbReference>
<dbReference type="InterPro" id="IPR003495">
    <property type="entry name" value="CobW/HypB/UreG_nucleotide-bd"/>
</dbReference>
<dbReference type="InterPro" id="IPR027417">
    <property type="entry name" value="P-loop_NTPase"/>
</dbReference>
<dbReference type="InterPro" id="IPR004400">
    <property type="entry name" value="UreG"/>
</dbReference>
<dbReference type="NCBIfam" id="TIGR00101">
    <property type="entry name" value="ureG"/>
    <property type="match status" value="1"/>
</dbReference>
<dbReference type="PANTHER" id="PTHR31715">
    <property type="entry name" value="UREASE ACCESSORY PROTEIN G"/>
    <property type="match status" value="1"/>
</dbReference>
<dbReference type="PANTHER" id="PTHR31715:SF0">
    <property type="entry name" value="UREASE ACCESSORY PROTEIN G"/>
    <property type="match status" value="1"/>
</dbReference>
<dbReference type="Pfam" id="PF02492">
    <property type="entry name" value="cobW"/>
    <property type="match status" value="1"/>
</dbReference>
<dbReference type="PIRSF" id="PIRSF005624">
    <property type="entry name" value="Ni-bind_GTPase"/>
    <property type="match status" value="1"/>
</dbReference>
<dbReference type="SUPFAM" id="SSF52540">
    <property type="entry name" value="P-loop containing nucleoside triphosphate hydrolases"/>
    <property type="match status" value="1"/>
</dbReference>